<organism>
    <name type="scientific">Neisseria gonorrhoeae</name>
    <dbReference type="NCBI Taxonomy" id="485"/>
    <lineage>
        <taxon>Bacteria</taxon>
        <taxon>Pseudomonadati</taxon>
        <taxon>Pseudomonadota</taxon>
        <taxon>Betaproteobacteria</taxon>
        <taxon>Neisseriales</taxon>
        <taxon>Neisseriaceae</taxon>
        <taxon>Neisseria</taxon>
    </lineage>
</organism>
<proteinExistence type="inferred from homology"/>
<comment type="function">
    <text evidence="1">Involved in histidine transport.</text>
</comment>
<comment type="subcellular location">
    <subcellularLocation>
        <location evidence="3">Cell membrane</location>
        <topology evidence="3">Lipid-anchor</topology>
    </subcellularLocation>
</comment>
<comment type="similarity">
    <text evidence="3">Belongs to the bacterial solute-binding protein 3 family.</text>
</comment>
<name>HISJ_NEIGO</name>
<evidence type="ECO:0000250" key="1"/>
<evidence type="ECO:0000255" key="2">
    <source>
        <dbReference type="PROSITE-ProRule" id="PRU00303"/>
    </source>
</evidence>
<evidence type="ECO:0000305" key="3"/>
<keyword id="KW-0029">Amino-acid transport</keyword>
<keyword id="KW-1003">Cell membrane</keyword>
<keyword id="KW-0449">Lipoprotein</keyword>
<keyword id="KW-0472">Membrane</keyword>
<keyword id="KW-0564">Palmitate</keyword>
<keyword id="KW-0732">Signal</keyword>
<keyword id="KW-0813">Transport</keyword>
<feature type="signal peptide" evidence="2">
    <location>
        <begin position="1"/>
        <end position="20"/>
    </location>
</feature>
<feature type="chain" id="PRO_0000031765" description="Probable histidine-binding protein">
    <location>
        <begin position="21"/>
        <end position="268"/>
    </location>
</feature>
<feature type="lipid moiety-binding region" description="N-palmitoyl cysteine" evidence="3">
    <location>
        <position position="21"/>
    </location>
</feature>
<feature type="lipid moiety-binding region" description="S-diacylglycerol cysteine" evidence="3">
    <location>
        <position position="21"/>
    </location>
</feature>
<protein>
    <recommendedName>
        <fullName>Probable histidine-binding protein</fullName>
        <shortName>HBP</shortName>
    </recommendedName>
</protein>
<dbReference type="EMBL" id="X64421">
    <property type="protein sequence ID" value="CAA45768.1"/>
    <property type="molecule type" value="Genomic_DNA"/>
</dbReference>
<dbReference type="PIR" id="S19184">
    <property type="entry name" value="S19184"/>
</dbReference>
<dbReference type="RefSeq" id="WP_003691772.1">
    <property type="nucleotide sequence ID" value="NZ_UGRL01000001.1"/>
</dbReference>
<dbReference type="SMR" id="Q06758"/>
<dbReference type="GO" id="GO:0005886">
    <property type="term" value="C:plasma membrane"/>
    <property type="evidence" value="ECO:0007669"/>
    <property type="project" value="UniProtKB-SubCell"/>
</dbReference>
<dbReference type="GO" id="GO:0015276">
    <property type="term" value="F:ligand-gated monoatomic ion channel activity"/>
    <property type="evidence" value="ECO:0007669"/>
    <property type="project" value="InterPro"/>
</dbReference>
<dbReference type="GO" id="GO:0006865">
    <property type="term" value="P:amino acid transport"/>
    <property type="evidence" value="ECO:0007669"/>
    <property type="project" value="UniProtKB-KW"/>
</dbReference>
<dbReference type="CDD" id="cd13624">
    <property type="entry name" value="PBP2_Arg_Lys_His"/>
    <property type="match status" value="1"/>
</dbReference>
<dbReference type="Gene3D" id="3.40.190.10">
    <property type="entry name" value="Periplasmic binding protein-like II"/>
    <property type="match status" value="2"/>
</dbReference>
<dbReference type="InterPro" id="IPR001320">
    <property type="entry name" value="Iontro_rcpt_C"/>
</dbReference>
<dbReference type="InterPro" id="IPR018313">
    <property type="entry name" value="SBP_3_CS"/>
</dbReference>
<dbReference type="InterPro" id="IPR001638">
    <property type="entry name" value="Solute-binding_3/MltF_N"/>
</dbReference>
<dbReference type="PANTHER" id="PTHR35936:SF17">
    <property type="entry name" value="ARGININE-BINDING EXTRACELLULAR PROTEIN ARTP"/>
    <property type="match status" value="1"/>
</dbReference>
<dbReference type="PANTHER" id="PTHR35936">
    <property type="entry name" value="MEMBRANE-BOUND LYTIC MUREIN TRANSGLYCOSYLASE F"/>
    <property type="match status" value="1"/>
</dbReference>
<dbReference type="Pfam" id="PF00497">
    <property type="entry name" value="SBP_bac_3"/>
    <property type="match status" value="1"/>
</dbReference>
<dbReference type="SMART" id="SM00062">
    <property type="entry name" value="PBPb"/>
    <property type="match status" value="1"/>
</dbReference>
<dbReference type="SMART" id="SM00079">
    <property type="entry name" value="PBPe"/>
    <property type="match status" value="1"/>
</dbReference>
<dbReference type="SUPFAM" id="SSF53850">
    <property type="entry name" value="Periplasmic binding protein-like II"/>
    <property type="match status" value="1"/>
</dbReference>
<dbReference type="PROSITE" id="PS51257">
    <property type="entry name" value="PROKAR_LIPOPROTEIN"/>
    <property type="match status" value="1"/>
</dbReference>
<dbReference type="PROSITE" id="PS01039">
    <property type="entry name" value="SBP_BACTERIAL_3"/>
    <property type="match status" value="1"/>
</dbReference>
<gene>
    <name type="primary">hisJ</name>
</gene>
<sequence length="268" mass="28859">MNMKKWIAAALACSALALSACGGQGKDAAAPAANPGKVYRVASNAEFAPFESLDSKGNVEGFDVDLMNAMAKAGNFKIEFKHQPWDSLFPALNNGDADIVMSGVTITDDRKQSMDFSDPYFEITQVVLVPKGKKVSSSDDLKKMNKVGVVTGHTGDFSVSKLLGNDNPKIARFENVPLIIKELENGGLDSVVSDSAVIANYVKNNPAKGMDFVTLPDFTTEHYGIAVRKGDEATVKMLNDALEKVRESGEYDKIYAKYFAKEGGQAAK</sequence>
<reference key="1">
    <citation type="journal article" date="1992" name="Res. Microbiol.">
        <title>Cloning and characterization of a Neisseria gene homologous to hisJ and argT of Escherichia coli and Salmonella typhimurium.</title>
        <authorList>
            <person name="Lavitola A."/>
            <person name="Vanni M."/>
            <person name="Martin P.M.V."/>
            <person name="Bruni C.B."/>
        </authorList>
    </citation>
    <scope>NUCLEOTIDE SEQUENCE [GENOMIC DNA]</scope>
    <source>
        <strain>T2</strain>
    </source>
</reference>
<accession>Q06758</accession>